<protein>
    <recommendedName>
        <fullName evidence="3">Head fiber dimeric protein</fullName>
    </recommendedName>
    <alternativeName>
        <fullName evidence="4">Capsid fiber dimeric protein</fullName>
    </alternativeName>
    <alternativeName>
        <fullName evidence="2">Gene product 29</fullName>
        <shortName evidence="2">gp29</shortName>
    </alternativeName>
</protein>
<comment type="function">
    <text evidence="1">Forms short fibers at the surface of the viral capsid.</text>
</comment>
<comment type="subunit">
    <text evidence="1">Homodimer (PubMed:37138077). Interacts with the major capsid protein (PubMed:37138077).</text>
</comment>
<comment type="subcellular location">
    <subcellularLocation>
        <location evidence="1">Virion</location>
    </subcellularLocation>
    <text evidence="1">Present in 110 copies in the virion.</text>
</comment>
<name>HFD_BPCA1</name>
<dbReference type="EMBL" id="MH675552">
    <property type="protein sequence ID" value="AXQ62672.1"/>
    <property type="molecule type" value="Genomic_DNA"/>
</dbReference>
<dbReference type="PDB" id="7QOF">
    <property type="method" value="EM"/>
    <property type="resolution" value="3.01 A"/>
    <property type="chains" value="j/k=1-122"/>
</dbReference>
<dbReference type="PDB" id="8CKB">
    <property type="method" value="EM"/>
    <property type="resolution" value="4.39 A"/>
    <property type="chains" value="A511=112-118"/>
</dbReference>
<dbReference type="PDBsum" id="7QOF"/>
<dbReference type="PDBsum" id="8CKB"/>
<dbReference type="EMDB" id="EMD-14088"/>
<dbReference type="SMR" id="A0A385DVL5"/>
<dbReference type="Proteomes" id="UP000262320">
    <property type="component" value="Genome"/>
</dbReference>
<dbReference type="GO" id="GO:0044423">
    <property type="term" value="C:virion component"/>
    <property type="evidence" value="ECO:0007669"/>
    <property type="project" value="UniProtKB-KW"/>
</dbReference>
<dbReference type="GO" id="GO:0046718">
    <property type="term" value="P:symbiont entry into host cell"/>
    <property type="evidence" value="ECO:0007669"/>
    <property type="project" value="UniProtKB-KW"/>
</dbReference>
<dbReference type="GO" id="GO:0019062">
    <property type="term" value="P:virion attachment to host cell"/>
    <property type="evidence" value="ECO:0007669"/>
    <property type="project" value="UniProtKB-KW"/>
</dbReference>
<evidence type="ECO:0000269" key="1">
    <source>
    </source>
</evidence>
<evidence type="ECO:0000303" key="2">
    <source>
    </source>
</evidence>
<evidence type="ECO:0000303" key="3">
    <source>
    </source>
</evidence>
<evidence type="ECO:0000305" key="4"/>
<evidence type="ECO:0000312" key="5">
    <source>
        <dbReference type="EMBL" id="AXQ62672.1"/>
    </source>
</evidence>
<evidence type="ECO:0007829" key="6">
    <source>
        <dbReference type="PDB" id="7QOF"/>
    </source>
</evidence>
<sequence>MKRVLNLGNLSRIVEGDPNEITDDEILVIKDKIIEGKIIDIQKRVDGKLVSLITEKYTYTINPTPADAIVVINGSTTKSIRAAKGHTVTWSVSKTGFVTQSGSDVISGDVSKDVTLVANPAS</sequence>
<feature type="chain" id="PRO_0000458025" description="Head fiber dimeric protein">
    <location>
        <begin position="1"/>
        <end position="122"/>
    </location>
</feature>
<feature type="strand" evidence="6">
    <location>
        <begin position="2"/>
        <end position="5"/>
    </location>
</feature>
<feature type="helix" evidence="6">
    <location>
        <begin position="7"/>
        <end position="10"/>
    </location>
</feature>
<feature type="strand" evidence="6">
    <location>
        <begin position="13"/>
        <end position="16"/>
    </location>
</feature>
<feature type="helix" evidence="6">
    <location>
        <begin position="18"/>
        <end position="20"/>
    </location>
</feature>
<feature type="strand" evidence="6">
    <location>
        <begin position="23"/>
        <end position="30"/>
    </location>
</feature>
<feature type="strand" evidence="6">
    <location>
        <begin position="32"/>
        <end position="36"/>
    </location>
</feature>
<feature type="strand" evidence="6">
    <location>
        <begin position="38"/>
        <end position="53"/>
    </location>
</feature>
<keyword id="KW-0002">3D-structure</keyword>
<keyword id="KW-0945">Host-virus interaction</keyword>
<keyword id="KW-1185">Reference proteome</keyword>
<keyword id="KW-1161">Viral attachment to host cell</keyword>
<keyword id="KW-0946">Virion</keyword>
<keyword id="KW-1160">Virus entry into host cell</keyword>
<reference key="1">
    <citation type="journal article" date="2018" name="Nat. Commun.">
        <title>PhiCrAss001 represents the most abundant bacteriophage family in the human gut and infects Bacteroides intestinalis.</title>
        <authorList>
            <person name="Shkoporov A.N."/>
            <person name="Khokhlova E.V."/>
            <person name="Fitzgerald C.B."/>
            <person name="Stockdale S.R."/>
            <person name="Draper L.A."/>
            <person name="Ross R.P."/>
            <person name="Hill C."/>
        </authorList>
    </citation>
    <scope>NUCLEOTIDE SEQUENCE [LARGE SCALE GENOMIC DNA]</scope>
</reference>
<reference key="2">
    <citation type="journal article" date="2023" name="Nature">
        <title>Structural atlas of a human gut crassvirus.</title>
        <authorList>
            <person name="Bayfield O.W."/>
            <person name="Shkoporov A.N."/>
            <person name="Yutin N."/>
            <person name="Khokhlova E.V."/>
            <person name="Smith J.L.R."/>
            <person name="Hawkins D.E.D.P."/>
            <person name="Koonin E.V."/>
            <person name="Hill C."/>
            <person name="Antson A.A."/>
        </authorList>
    </citation>
    <scope>SUBCELLULAR LOCATION</scope>
    <scope>SUBUNIT</scope>
    <scope>INTERACTION WITH THE MAJOR CAPSID PROTEIN</scope>
</reference>
<proteinExistence type="evidence at protein level"/>
<gene>
    <name evidence="5" type="ORF">crAss001_29</name>
</gene>
<organismHost>
    <name type="scientific">Bacteroides intestinalis</name>
    <dbReference type="NCBI Taxonomy" id="329854"/>
</organismHost>
<accession>A0A385DVL5</accession>
<organism>
    <name type="scientific">Bacteroides phage crAss001</name>
    <name type="common">Bacteroides phage PhiCrAss001</name>
    <dbReference type="NCBI Taxonomy" id="2301731"/>
    <lineage>
        <taxon>Viruses</taxon>
        <taxon>Duplodnaviria</taxon>
        <taxon>Heunggongvirae</taxon>
        <taxon>Uroviricota</taxon>
        <taxon>Caudoviricetes</taxon>
        <taxon>Crassvirales</taxon>
        <taxon>Steigviridae</taxon>
        <taxon>Asinivirinae</taxon>
        <taxon>Kehishuvirus</taxon>
        <taxon>Kehishuvirus primarius</taxon>
    </lineage>
</organism>